<dbReference type="EMBL" id="BX571857">
    <property type="protein sequence ID" value="CAG42487.1"/>
    <property type="molecule type" value="Genomic_DNA"/>
</dbReference>
<dbReference type="SMR" id="Q6GB84"/>
<dbReference type="KEGG" id="sas:SAS0711"/>
<dbReference type="HOGENOM" id="CLU_000445_11_1_9"/>
<dbReference type="GO" id="GO:0005886">
    <property type="term" value="C:plasma membrane"/>
    <property type="evidence" value="ECO:0007669"/>
    <property type="project" value="UniProtKB-SubCell"/>
</dbReference>
<dbReference type="GO" id="GO:0052621">
    <property type="term" value="F:diguanylate cyclase activity"/>
    <property type="evidence" value="ECO:0007669"/>
    <property type="project" value="TreeGrafter"/>
</dbReference>
<dbReference type="GO" id="GO:0000155">
    <property type="term" value="F:phosphorelay sensor kinase activity"/>
    <property type="evidence" value="ECO:0007669"/>
    <property type="project" value="InterPro"/>
</dbReference>
<dbReference type="GO" id="GO:0043709">
    <property type="term" value="P:cell adhesion involved in single-species biofilm formation"/>
    <property type="evidence" value="ECO:0007669"/>
    <property type="project" value="TreeGrafter"/>
</dbReference>
<dbReference type="GO" id="GO:0071555">
    <property type="term" value="P:cell wall organization"/>
    <property type="evidence" value="ECO:0007669"/>
    <property type="project" value="InterPro"/>
</dbReference>
<dbReference type="GO" id="GO:1902201">
    <property type="term" value="P:negative regulation of bacterial-type flagellum-dependent cell motility"/>
    <property type="evidence" value="ECO:0007669"/>
    <property type="project" value="TreeGrafter"/>
</dbReference>
<dbReference type="CDD" id="cd01949">
    <property type="entry name" value="GGDEF"/>
    <property type="match status" value="1"/>
</dbReference>
<dbReference type="FunFam" id="3.30.70.270:FF:000038">
    <property type="entry name" value="Diguanylate cyclase domain protein"/>
    <property type="match status" value="1"/>
</dbReference>
<dbReference type="Gene3D" id="3.30.70.270">
    <property type="match status" value="1"/>
</dbReference>
<dbReference type="InterPro" id="IPR050469">
    <property type="entry name" value="Diguanylate_Cyclase"/>
</dbReference>
<dbReference type="InterPro" id="IPR000160">
    <property type="entry name" value="GGDEF_dom"/>
</dbReference>
<dbReference type="InterPro" id="IPR029787">
    <property type="entry name" value="Nucleotide_cyclase"/>
</dbReference>
<dbReference type="InterPro" id="IPR043128">
    <property type="entry name" value="Rev_trsase/Diguanyl_cyclase"/>
</dbReference>
<dbReference type="InterPro" id="IPR011620">
    <property type="entry name" value="Sig_transdc_His_kinase_LytS_TM"/>
</dbReference>
<dbReference type="NCBIfam" id="TIGR00254">
    <property type="entry name" value="GGDEF"/>
    <property type="match status" value="1"/>
</dbReference>
<dbReference type="PANTHER" id="PTHR45138:SF9">
    <property type="entry name" value="DIGUANYLATE CYCLASE DGCM-RELATED"/>
    <property type="match status" value="1"/>
</dbReference>
<dbReference type="PANTHER" id="PTHR45138">
    <property type="entry name" value="REGULATORY COMPONENTS OF SENSORY TRANSDUCTION SYSTEM"/>
    <property type="match status" value="1"/>
</dbReference>
<dbReference type="Pfam" id="PF07694">
    <property type="entry name" value="5TM-5TMR_LYT"/>
    <property type="match status" value="1"/>
</dbReference>
<dbReference type="Pfam" id="PF00990">
    <property type="entry name" value="GGDEF"/>
    <property type="match status" value="1"/>
</dbReference>
<dbReference type="SMART" id="SM00267">
    <property type="entry name" value="GGDEF"/>
    <property type="match status" value="1"/>
</dbReference>
<dbReference type="SUPFAM" id="SSF55073">
    <property type="entry name" value="Nucleotide cyclase"/>
    <property type="match status" value="1"/>
</dbReference>
<dbReference type="PROSITE" id="PS50887">
    <property type="entry name" value="GGDEF"/>
    <property type="match status" value="1"/>
</dbReference>
<feature type="chain" id="PRO_0000286955" description="Uncharacterized membrane protein SAS0711">
    <location>
        <begin position="1"/>
        <end position="356"/>
    </location>
</feature>
<feature type="transmembrane region" description="Helical" evidence="1">
    <location>
        <begin position="2"/>
        <end position="22"/>
    </location>
</feature>
<feature type="transmembrane region" description="Helical" evidence="1">
    <location>
        <begin position="35"/>
        <end position="55"/>
    </location>
</feature>
<feature type="transmembrane region" description="Helical" evidence="1">
    <location>
        <begin position="74"/>
        <end position="94"/>
    </location>
</feature>
<feature type="transmembrane region" description="Helical" evidence="1">
    <location>
        <begin position="99"/>
        <end position="119"/>
    </location>
</feature>
<feature type="transmembrane region" description="Helical" evidence="1">
    <location>
        <begin position="124"/>
        <end position="144"/>
    </location>
</feature>
<feature type="transmembrane region" description="Helical" evidence="1">
    <location>
        <begin position="154"/>
        <end position="174"/>
    </location>
</feature>
<feature type="domain" description="GGDEF" evidence="2">
    <location>
        <begin position="218"/>
        <end position="353"/>
    </location>
</feature>
<accession>Q6GB84</accession>
<evidence type="ECO:0000255" key="1"/>
<evidence type="ECO:0000255" key="2">
    <source>
        <dbReference type="PROSITE-ProRule" id="PRU00095"/>
    </source>
</evidence>
<evidence type="ECO:0000305" key="3"/>
<gene>
    <name type="ordered locus">SAS0711</name>
</gene>
<proteinExistence type="predicted"/>
<reference key="1">
    <citation type="journal article" date="2004" name="Proc. Natl. Acad. Sci. U.S.A.">
        <title>Complete genomes of two clinical Staphylococcus aureus strains: evidence for the rapid evolution of virulence and drug resistance.</title>
        <authorList>
            <person name="Holden M.T.G."/>
            <person name="Feil E.J."/>
            <person name="Lindsay J.A."/>
            <person name="Peacock S.J."/>
            <person name="Day N.P.J."/>
            <person name="Enright M.C."/>
            <person name="Foster T.J."/>
            <person name="Moore C.E."/>
            <person name="Hurst L."/>
            <person name="Atkin R."/>
            <person name="Barron A."/>
            <person name="Bason N."/>
            <person name="Bentley S.D."/>
            <person name="Chillingworth C."/>
            <person name="Chillingworth T."/>
            <person name="Churcher C."/>
            <person name="Clark L."/>
            <person name="Corton C."/>
            <person name="Cronin A."/>
            <person name="Doggett J."/>
            <person name="Dowd L."/>
            <person name="Feltwell T."/>
            <person name="Hance Z."/>
            <person name="Harris B."/>
            <person name="Hauser H."/>
            <person name="Holroyd S."/>
            <person name="Jagels K."/>
            <person name="James K.D."/>
            <person name="Lennard N."/>
            <person name="Line A."/>
            <person name="Mayes R."/>
            <person name="Moule S."/>
            <person name="Mungall K."/>
            <person name="Ormond D."/>
            <person name="Quail M.A."/>
            <person name="Rabbinowitsch E."/>
            <person name="Rutherford K.M."/>
            <person name="Sanders M."/>
            <person name="Sharp S."/>
            <person name="Simmonds M."/>
            <person name="Stevens K."/>
            <person name="Whitehead S."/>
            <person name="Barrell B.G."/>
            <person name="Spratt B.G."/>
            <person name="Parkhill J."/>
        </authorList>
    </citation>
    <scope>NUCLEOTIDE SEQUENCE [LARGE SCALE GENOMIC DNA]</scope>
    <source>
        <strain>MSSA476</strain>
    </source>
</reference>
<protein>
    <recommendedName>
        <fullName>Uncharacterized membrane protein SAS0711</fullName>
    </recommendedName>
</protein>
<sequence>MFEAFIYNISVIVAGIYLFHRLQYSENKRMVFSKAYVTVLMTIVSLLLSVYPIPYREDYLIHLTFVPLLFLGRFTNMVYTLSATVIVAIVEIVVFNNSIMYGVTLIVIAAVTSAIGPFLKQNDVLSLLILNVVTIIILFGVALVSPIYTLSEVIILIPISLIITLASAITFVDIWHFFSLVNRYENEDKYDYLTGLGNVKEFDRHLNEISRKAEKEHQSIALLLIDIDGFKDVNDTYSHKSGDAVLKQMSQLLKNYVPNQFKIFRNGGEEFSVVIHNYSLDQSVKLAENIRSGVEKSSFHLPNKEVIKLSVSIGVGYLTDDDPKSQRKVFKDADDMVHVAKNQGRNKVMFNPIINL</sequence>
<name>Y711_STAAS</name>
<organism>
    <name type="scientific">Staphylococcus aureus (strain MSSA476)</name>
    <dbReference type="NCBI Taxonomy" id="282459"/>
    <lineage>
        <taxon>Bacteria</taxon>
        <taxon>Bacillati</taxon>
        <taxon>Bacillota</taxon>
        <taxon>Bacilli</taxon>
        <taxon>Bacillales</taxon>
        <taxon>Staphylococcaceae</taxon>
        <taxon>Staphylococcus</taxon>
    </lineage>
</organism>
<keyword id="KW-1003">Cell membrane</keyword>
<keyword id="KW-0472">Membrane</keyword>
<keyword id="KW-0812">Transmembrane</keyword>
<keyword id="KW-1133">Transmembrane helix</keyword>
<comment type="subcellular location">
    <subcellularLocation>
        <location evidence="3">Cell membrane</location>
        <topology evidence="3">Multi-pass membrane protein</topology>
    </subcellularLocation>
</comment>